<evidence type="ECO:0000250" key="1"/>
<evidence type="ECO:0000255" key="2"/>
<evidence type="ECO:0000305" key="3"/>
<evidence type="ECO:0000305" key="4">
    <source>
    </source>
</evidence>
<sequence length="31" mass="3435">MPTITSYFGFLLASLIFTLALFIGSSKIRLL</sequence>
<reference key="1">
    <citation type="journal article" date="2007" name="Mol. Biol. Evol.">
        <title>Chloroplast genome (cpDNA) of Cycas taitungensis and 56 cp protein-coding genes of Gnetum parvifolium: insights into cpDNA evolution and phylogeny of extant seed plants.</title>
        <authorList>
            <person name="Wu C.-S."/>
            <person name="Wang Y.-N."/>
            <person name="Liu S.-M."/>
            <person name="Chaw S.-M."/>
        </authorList>
    </citation>
    <scope>NUCLEOTIDE SEQUENCE [LARGE SCALE GENOMIC DNA]</scope>
    <scope>SUGGESTION OF RNA EDITING</scope>
</reference>
<feature type="chain" id="PRO_0000300141" description="Cytochrome b6-f complex subunit 6">
    <location>
        <begin position="1"/>
        <end position="31"/>
    </location>
</feature>
<feature type="transmembrane region" description="Helical" evidence="2">
    <location>
        <begin position="4"/>
        <end position="24"/>
    </location>
</feature>
<accession>A6H5J7</accession>
<name>PETL_CYCTA</name>
<gene>
    <name type="primary">petL</name>
</gene>
<comment type="function">
    <text evidence="1">Component of the cytochrome b6-f complex, which mediates electron transfer between photosystem II (PSII) and photosystem I (PSI), cyclic electron flow around PSI, and state transitions. PetL is important for photoautotrophic growth as well as for electron transfer efficiency and stability of the cytochrome b6-f complex (By similarity).</text>
</comment>
<comment type="subunit">
    <text evidence="1">The 4 large subunits of the cytochrome b6-f complex are cytochrome b6, subunit IV (17 kDa polypeptide, PetD), cytochrome f and the Rieske protein, while the 4 small subunits are PetG, PetL, PetM and PetN. The complex functions as a dimer (By similarity).</text>
</comment>
<comment type="subcellular location">
    <subcellularLocation>
        <location evidence="1">Plastid</location>
        <location evidence="1">Chloroplast thylakoid membrane</location>
        <topology evidence="1">Single-pass membrane protein</topology>
    </subcellularLocation>
</comment>
<comment type="RNA editing">
    <location>
        <position position="1" evidence="4"/>
    </location>
    <text evidence="4">The initiator methionine is created by RNA editing.</text>
</comment>
<comment type="similarity">
    <text evidence="3">Belongs to the PetL family.</text>
</comment>
<dbReference type="EMBL" id="AP009339">
    <property type="protein sequence ID" value="BAF64963.1"/>
    <property type="molecule type" value="Genomic_DNA"/>
</dbReference>
<dbReference type="RefSeq" id="YP_001312222.1">
    <property type="nucleotide sequence ID" value="NC_009618.1"/>
</dbReference>
<dbReference type="SMR" id="A6H5J7"/>
<dbReference type="GeneID" id="5309610"/>
<dbReference type="GO" id="GO:0009535">
    <property type="term" value="C:chloroplast thylakoid membrane"/>
    <property type="evidence" value="ECO:0007669"/>
    <property type="project" value="UniProtKB-SubCell"/>
</dbReference>
<dbReference type="GO" id="GO:0009512">
    <property type="term" value="C:cytochrome b6f complex"/>
    <property type="evidence" value="ECO:0007669"/>
    <property type="project" value="InterPro"/>
</dbReference>
<dbReference type="GO" id="GO:0045158">
    <property type="term" value="F:electron transporter, transferring electrons within cytochrome b6/f complex of photosystem II activity"/>
    <property type="evidence" value="ECO:0007669"/>
    <property type="project" value="UniProtKB-UniRule"/>
</dbReference>
<dbReference type="GO" id="GO:0015979">
    <property type="term" value="P:photosynthesis"/>
    <property type="evidence" value="ECO:0007669"/>
    <property type="project" value="UniProtKB-KW"/>
</dbReference>
<dbReference type="HAMAP" id="MF_00433">
    <property type="entry name" value="Cytb6_f_PetL"/>
    <property type="match status" value="1"/>
</dbReference>
<dbReference type="InterPro" id="IPR007802">
    <property type="entry name" value="Cyt_b6/f_cplx_su6"/>
</dbReference>
<dbReference type="PANTHER" id="PTHR37266">
    <property type="entry name" value="CYTOCHROME B6-F COMPLEX SUBUNIT 6"/>
    <property type="match status" value="1"/>
</dbReference>
<dbReference type="PANTHER" id="PTHR37266:SF1">
    <property type="entry name" value="CYTOCHROME B6-F COMPLEX SUBUNIT 6"/>
    <property type="match status" value="1"/>
</dbReference>
<dbReference type="Pfam" id="PF05115">
    <property type="entry name" value="PetL"/>
    <property type="match status" value="1"/>
</dbReference>
<dbReference type="SUPFAM" id="SSF103436">
    <property type="entry name" value="PetL subunit of the cytochrome b6f complex"/>
    <property type="match status" value="1"/>
</dbReference>
<organism>
    <name type="scientific">Cycas taitungensis</name>
    <name type="common">Prince sago</name>
    <name type="synonym">Cycas taiwaniana</name>
    <dbReference type="NCBI Taxonomy" id="54799"/>
    <lineage>
        <taxon>Eukaryota</taxon>
        <taxon>Viridiplantae</taxon>
        <taxon>Streptophyta</taxon>
        <taxon>Embryophyta</taxon>
        <taxon>Tracheophyta</taxon>
        <taxon>Spermatophyta</taxon>
        <taxon>Cycadidae</taxon>
        <taxon>Cycadales</taxon>
        <taxon>Cycadaceae</taxon>
        <taxon>Cycas</taxon>
    </lineage>
</organism>
<geneLocation type="chloroplast"/>
<protein>
    <recommendedName>
        <fullName>Cytochrome b6-f complex subunit 6</fullName>
    </recommendedName>
    <alternativeName>
        <fullName>Cytochrome b6-f complex subunit PetL</fullName>
    </alternativeName>
    <alternativeName>
        <fullName>Cytochrome b6-f complex subunit VI</fullName>
    </alternativeName>
</protein>
<keyword id="KW-0150">Chloroplast</keyword>
<keyword id="KW-0249">Electron transport</keyword>
<keyword id="KW-0472">Membrane</keyword>
<keyword id="KW-0602">Photosynthesis</keyword>
<keyword id="KW-0934">Plastid</keyword>
<keyword id="KW-0691">RNA editing</keyword>
<keyword id="KW-0793">Thylakoid</keyword>
<keyword id="KW-0812">Transmembrane</keyword>
<keyword id="KW-1133">Transmembrane helix</keyword>
<keyword id="KW-0813">Transport</keyword>
<proteinExistence type="evidence at transcript level"/>